<name>UREE_HELPS</name>
<proteinExistence type="inferred from homology"/>
<dbReference type="EMBL" id="CP001072">
    <property type="protein sequence ID" value="ACD47532.1"/>
    <property type="molecule type" value="Genomic_DNA"/>
</dbReference>
<dbReference type="RefSeq" id="WP_000583038.1">
    <property type="nucleotide sequence ID" value="NC_010698.2"/>
</dbReference>
<dbReference type="SMR" id="B2UW67"/>
<dbReference type="KEGG" id="hps:HPSH_00335"/>
<dbReference type="HOGENOM" id="CLU_093757_3_0_7"/>
<dbReference type="GO" id="GO:0005737">
    <property type="term" value="C:cytoplasm"/>
    <property type="evidence" value="ECO:0007669"/>
    <property type="project" value="UniProtKB-SubCell"/>
</dbReference>
<dbReference type="GO" id="GO:0016151">
    <property type="term" value="F:nickel cation binding"/>
    <property type="evidence" value="ECO:0007669"/>
    <property type="project" value="UniProtKB-UniRule"/>
</dbReference>
<dbReference type="GO" id="GO:0051082">
    <property type="term" value="F:unfolded protein binding"/>
    <property type="evidence" value="ECO:0007669"/>
    <property type="project" value="UniProtKB-UniRule"/>
</dbReference>
<dbReference type="GO" id="GO:0006457">
    <property type="term" value="P:protein folding"/>
    <property type="evidence" value="ECO:0007669"/>
    <property type="project" value="InterPro"/>
</dbReference>
<dbReference type="GO" id="GO:0065003">
    <property type="term" value="P:protein-containing complex assembly"/>
    <property type="evidence" value="ECO:0007669"/>
    <property type="project" value="InterPro"/>
</dbReference>
<dbReference type="GO" id="GO:0019627">
    <property type="term" value="P:urea metabolic process"/>
    <property type="evidence" value="ECO:0007669"/>
    <property type="project" value="InterPro"/>
</dbReference>
<dbReference type="CDD" id="cd00571">
    <property type="entry name" value="UreE"/>
    <property type="match status" value="1"/>
</dbReference>
<dbReference type="Gene3D" id="2.60.260.20">
    <property type="entry name" value="Urease metallochaperone UreE, N-terminal domain"/>
    <property type="match status" value="1"/>
</dbReference>
<dbReference type="Gene3D" id="3.30.70.790">
    <property type="entry name" value="UreE, C-terminal domain"/>
    <property type="match status" value="1"/>
</dbReference>
<dbReference type="HAMAP" id="MF_00822">
    <property type="entry name" value="UreE"/>
    <property type="match status" value="1"/>
</dbReference>
<dbReference type="InterPro" id="IPR012406">
    <property type="entry name" value="UreE"/>
</dbReference>
<dbReference type="InterPro" id="IPR007864">
    <property type="entry name" value="UreE_C_dom"/>
</dbReference>
<dbReference type="InterPro" id="IPR004029">
    <property type="entry name" value="UreE_N"/>
</dbReference>
<dbReference type="InterPro" id="IPR036118">
    <property type="entry name" value="UreE_N_sf"/>
</dbReference>
<dbReference type="NCBIfam" id="NF009754">
    <property type="entry name" value="PRK13261.1-6"/>
    <property type="match status" value="1"/>
</dbReference>
<dbReference type="Pfam" id="PF05194">
    <property type="entry name" value="UreE_C"/>
    <property type="match status" value="1"/>
</dbReference>
<dbReference type="Pfam" id="PF02814">
    <property type="entry name" value="UreE_N"/>
    <property type="match status" value="1"/>
</dbReference>
<dbReference type="PIRSF" id="PIRSF036402">
    <property type="entry name" value="Ureas_acces_UreE"/>
    <property type="match status" value="1"/>
</dbReference>
<dbReference type="SMART" id="SM00988">
    <property type="entry name" value="UreE_N"/>
    <property type="match status" value="1"/>
</dbReference>
<dbReference type="SUPFAM" id="SSF69737">
    <property type="entry name" value="Urease metallochaperone UreE, C-terminal domain"/>
    <property type="match status" value="1"/>
</dbReference>
<dbReference type="SUPFAM" id="SSF69287">
    <property type="entry name" value="Urease metallochaperone UreE, N-terminal domain"/>
    <property type="match status" value="1"/>
</dbReference>
<gene>
    <name evidence="1" type="primary">ureE</name>
    <name type="ordered locus">HPSH_00335</name>
</gene>
<evidence type="ECO:0000255" key="1">
    <source>
        <dbReference type="HAMAP-Rule" id="MF_00822"/>
    </source>
</evidence>
<keyword id="KW-0143">Chaperone</keyword>
<keyword id="KW-0963">Cytoplasm</keyword>
<keyword id="KW-0533">Nickel</keyword>
<reference key="1">
    <citation type="submission" date="2008-05" db="EMBL/GenBank/DDBJ databases">
        <title>Genome sequence of Helicobacter pylori from the remote Amazon: traces of Asian ancestry of the first Americans.</title>
        <authorList>
            <person name="Kersulyte D."/>
            <person name="Kalia A."/>
            <person name="Gilman R.H."/>
            <person name="Berg D.E."/>
        </authorList>
    </citation>
    <scope>NUCLEOTIDE SEQUENCE [LARGE SCALE GENOMIC DNA]</scope>
    <source>
        <strain>Shi470</strain>
    </source>
</reference>
<feature type="chain" id="PRO_1000197439" description="Urease accessory protein UreE">
    <location>
        <begin position="1"/>
        <end position="170"/>
    </location>
</feature>
<protein>
    <recommendedName>
        <fullName evidence="1">Urease accessory protein UreE</fullName>
    </recommendedName>
</protein>
<accession>B2UW67</accession>
<sequence>MIIERLIGNLRDLNPLDFSVDYVDLEWFETRKKIARFKTRQGKDIAIRLKDAPKLGLSQGDILFKEEKEIIAVNILDSEVIHIQAKSVAEVAKICYEIGNRHAALYYGESQFEFKTPFEKPTLALLEKLGVQNHVLSSKLDSKDRLTVSMPHSEPNFKVSLASDFKVVMK</sequence>
<organism>
    <name type="scientific">Helicobacter pylori (strain Shi470)</name>
    <dbReference type="NCBI Taxonomy" id="512562"/>
    <lineage>
        <taxon>Bacteria</taxon>
        <taxon>Pseudomonadati</taxon>
        <taxon>Campylobacterota</taxon>
        <taxon>Epsilonproteobacteria</taxon>
        <taxon>Campylobacterales</taxon>
        <taxon>Helicobacteraceae</taxon>
        <taxon>Helicobacter</taxon>
    </lineage>
</organism>
<comment type="function">
    <text evidence="1">Involved in urease metallocenter assembly. Binds nickel. Probably functions as a nickel donor during metallocenter assembly.</text>
</comment>
<comment type="subcellular location">
    <subcellularLocation>
        <location evidence="1">Cytoplasm</location>
    </subcellularLocation>
</comment>
<comment type="similarity">
    <text evidence="1">Belongs to the UreE family.</text>
</comment>